<proteinExistence type="inferred from homology"/>
<organism>
    <name type="scientific">Escherichia coli O157:H7</name>
    <dbReference type="NCBI Taxonomy" id="83334"/>
    <lineage>
        <taxon>Bacteria</taxon>
        <taxon>Pseudomonadati</taxon>
        <taxon>Pseudomonadota</taxon>
        <taxon>Gammaproteobacteria</taxon>
        <taxon>Enterobacterales</taxon>
        <taxon>Enterobacteriaceae</taxon>
        <taxon>Escherichia</taxon>
    </lineage>
</organism>
<comment type="function">
    <text evidence="1">Involved in the biosynthesis of the siderophore enterobactin (enterochelin), which is a macrocyclic trimeric lactone of N-(2,3-dihydroxybenzoyl)-serine. EntF catalyzes the activation of L-serine via ATP-dependent PPi exchange reaction to form seryladenylate. Activated L-serine is loaded onto the peptidyl carrier domain via a thioester linkage to the phosphopanthetheine moiety, forming seryl-S-Ppant-EntF. EntF acts then as the sole catalyst for the formation of the three amide and three ester linkages found in enterobactin, using seryladenylate and 2,3-dihydroxybenzoate-S-Ppant-EntB (DHB-S-Ppant-EntB) as substrates, via the formation of a DHB-Ser-S-Ppant-EntF intermediate.</text>
</comment>
<comment type="catalytic activity">
    <reaction evidence="1">
        <text>3 2,3-dihydroxybenzoate + 3 L-serine + 6 ATP = enterobactin + 6 AMP + 6 diphosphate + 4 H(+)</text>
        <dbReference type="Rhea" id="RHEA:30571"/>
        <dbReference type="ChEBI" id="CHEBI:15378"/>
        <dbReference type="ChEBI" id="CHEBI:30616"/>
        <dbReference type="ChEBI" id="CHEBI:33019"/>
        <dbReference type="ChEBI" id="CHEBI:33384"/>
        <dbReference type="ChEBI" id="CHEBI:36654"/>
        <dbReference type="ChEBI" id="CHEBI:77805"/>
        <dbReference type="ChEBI" id="CHEBI:456215"/>
        <dbReference type="EC" id="6.3.2.14"/>
    </reaction>
</comment>
<comment type="catalytic activity">
    <reaction evidence="1">
        <text>holo-[peptidyl-carrier protein] + L-serine + ATP = L-seryl-[peptidyl-carrier protein] + AMP + diphosphate</text>
        <dbReference type="Rhea" id="RHEA:61704"/>
        <dbReference type="Rhea" id="RHEA-COMP:11480"/>
        <dbReference type="Rhea" id="RHEA-COMP:15913"/>
        <dbReference type="ChEBI" id="CHEBI:30616"/>
        <dbReference type="ChEBI" id="CHEBI:33019"/>
        <dbReference type="ChEBI" id="CHEBI:33384"/>
        <dbReference type="ChEBI" id="CHEBI:64479"/>
        <dbReference type="ChEBI" id="CHEBI:144955"/>
        <dbReference type="ChEBI" id="CHEBI:456215"/>
        <dbReference type="EC" id="6.2.1.72"/>
    </reaction>
</comment>
<comment type="cofactor">
    <cofactor evidence="1">
        <name>pantetheine 4'-phosphate</name>
        <dbReference type="ChEBI" id="CHEBI:47942"/>
    </cofactor>
    <text evidence="1">Binds 1 phosphopantetheine covalently.</text>
</comment>
<comment type="pathway">
    <text evidence="1">Siderophore biosynthesis; enterobactin biosynthesis.</text>
</comment>
<comment type="subunit">
    <text evidence="1">Proteins EntB, EntD, EntE and EntF are the component of the enterobactin synthase. Components probably do not form a stable complex. EntF acts as a catalytic monomer.</text>
</comment>
<comment type="subcellular location">
    <subcellularLocation>
        <location evidence="1">Cytoplasm</location>
    </subcellularLocation>
    <text evidence="1">Membrane-associated.</text>
</comment>
<comment type="PTM">
    <text evidence="1">4'-phosphopantetheine is transferred from CoA to a specific serine of apo-EntF by EntD. Holo-EntF so formed is then acylated with seryl-AMP.</text>
</comment>
<comment type="similarity">
    <text evidence="3">Belongs to the ATP-dependent AMP-binding enzyme family. EntF subfamily.</text>
</comment>
<dbReference type="EC" id="6.3.2.14" evidence="1"/>
<dbReference type="EC" id="6.2.1.72" evidence="1"/>
<dbReference type="EMBL" id="AE005174">
    <property type="protein sequence ID" value="AAG54921.1"/>
    <property type="molecule type" value="Genomic_DNA"/>
</dbReference>
<dbReference type="EMBL" id="BA000007">
    <property type="protein sequence ID" value="BAB34048.1"/>
    <property type="molecule type" value="Genomic_DNA"/>
</dbReference>
<dbReference type="PIR" id="A90707">
    <property type="entry name" value="A90707"/>
</dbReference>
<dbReference type="PIR" id="E85557">
    <property type="entry name" value="E85557"/>
</dbReference>
<dbReference type="RefSeq" id="NP_308652.1">
    <property type="nucleotide sequence ID" value="NC_002695.1"/>
</dbReference>
<dbReference type="RefSeq" id="WP_000077784.1">
    <property type="nucleotide sequence ID" value="NZ_VOAI01000012.1"/>
</dbReference>
<dbReference type="SMR" id="Q8XBV9"/>
<dbReference type="STRING" id="155864.Z0727"/>
<dbReference type="ESTHER" id="ecoli-entf">
    <property type="family name" value="Thioesterase"/>
</dbReference>
<dbReference type="GeneID" id="916984"/>
<dbReference type="KEGG" id="ece:Z0727"/>
<dbReference type="KEGG" id="ecs:ECs_0625"/>
<dbReference type="PATRIC" id="fig|386585.9.peg.735"/>
<dbReference type="eggNOG" id="COG1020">
    <property type="taxonomic scope" value="Bacteria"/>
</dbReference>
<dbReference type="eggNOG" id="COG3319">
    <property type="taxonomic scope" value="Bacteria"/>
</dbReference>
<dbReference type="HOGENOM" id="CLU_000022_2_13_6"/>
<dbReference type="OMA" id="IISPQAF"/>
<dbReference type="UniPathway" id="UPA00017"/>
<dbReference type="Proteomes" id="UP000000558">
    <property type="component" value="Chromosome"/>
</dbReference>
<dbReference type="Proteomes" id="UP000002519">
    <property type="component" value="Chromosome"/>
</dbReference>
<dbReference type="GO" id="GO:0005829">
    <property type="term" value="C:cytosol"/>
    <property type="evidence" value="ECO:0000250"/>
    <property type="project" value="UniProtKB"/>
</dbReference>
<dbReference type="GO" id="GO:0009366">
    <property type="term" value="C:enterobactin synthetase complex"/>
    <property type="evidence" value="ECO:0000250"/>
    <property type="project" value="UniProtKB"/>
</dbReference>
<dbReference type="GO" id="GO:0005886">
    <property type="term" value="C:plasma membrane"/>
    <property type="evidence" value="ECO:0000250"/>
    <property type="project" value="UniProtKB"/>
</dbReference>
<dbReference type="GO" id="GO:0047527">
    <property type="term" value="F:2,3-dihydroxybenzoate-serine ligase activity"/>
    <property type="evidence" value="ECO:0000250"/>
    <property type="project" value="UniProtKB"/>
</dbReference>
<dbReference type="GO" id="GO:0005524">
    <property type="term" value="F:ATP binding"/>
    <property type="evidence" value="ECO:0007669"/>
    <property type="project" value="UniProtKB-KW"/>
</dbReference>
<dbReference type="GO" id="GO:0016779">
    <property type="term" value="F:nucleotidyltransferase activity"/>
    <property type="evidence" value="ECO:0000250"/>
    <property type="project" value="UniProtKB"/>
</dbReference>
<dbReference type="GO" id="GO:0031177">
    <property type="term" value="F:phosphopantetheine binding"/>
    <property type="evidence" value="ECO:0000250"/>
    <property type="project" value="UniProtKB"/>
</dbReference>
<dbReference type="GO" id="GO:0043041">
    <property type="term" value="P:amino acid activation for nonribosomal peptide biosynthetic process"/>
    <property type="evidence" value="ECO:0000250"/>
    <property type="project" value="UniProtKB"/>
</dbReference>
<dbReference type="GO" id="GO:0009239">
    <property type="term" value="P:enterobactin biosynthetic process"/>
    <property type="evidence" value="ECO:0000250"/>
    <property type="project" value="UniProtKB"/>
</dbReference>
<dbReference type="CDD" id="cd17646">
    <property type="entry name" value="A_NRPS_AB3403-like"/>
    <property type="match status" value="1"/>
</dbReference>
<dbReference type="CDD" id="cd19533">
    <property type="entry name" value="starter-C_NRPS"/>
    <property type="match status" value="1"/>
</dbReference>
<dbReference type="FunFam" id="2.30.38.10:FF:000002">
    <property type="entry name" value="Enterobactin synthase component F"/>
    <property type="match status" value="1"/>
</dbReference>
<dbReference type="FunFam" id="3.30.300.30:FF:000010">
    <property type="entry name" value="Enterobactin synthetase component F"/>
    <property type="match status" value="1"/>
</dbReference>
<dbReference type="FunFam" id="3.30.559.10:FF:000020">
    <property type="entry name" value="Enterobactin synthetase component F"/>
    <property type="match status" value="1"/>
</dbReference>
<dbReference type="FunFam" id="3.30.559.30:FF:000004">
    <property type="entry name" value="Enterobactin synthetase component F"/>
    <property type="match status" value="1"/>
</dbReference>
<dbReference type="FunFam" id="3.40.50.1820:FF:000142">
    <property type="entry name" value="Enterobactin synthetase component F"/>
    <property type="match status" value="1"/>
</dbReference>
<dbReference type="FunFam" id="3.40.50.980:FF:000002">
    <property type="entry name" value="Enterobactin synthetase component F"/>
    <property type="match status" value="1"/>
</dbReference>
<dbReference type="FunFam" id="3.40.50.12780:FF:000012">
    <property type="entry name" value="Non-ribosomal peptide synthetase"/>
    <property type="match status" value="1"/>
</dbReference>
<dbReference type="Gene3D" id="3.30.300.30">
    <property type="match status" value="1"/>
</dbReference>
<dbReference type="Gene3D" id="3.40.50.980">
    <property type="match status" value="2"/>
</dbReference>
<dbReference type="Gene3D" id="3.40.50.1820">
    <property type="entry name" value="alpha/beta hydrolase"/>
    <property type="match status" value="1"/>
</dbReference>
<dbReference type="Gene3D" id="3.30.559.10">
    <property type="entry name" value="Chloramphenicol acetyltransferase-like domain"/>
    <property type="match status" value="1"/>
</dbReference>
<dbReference type="Gene3D" id="2.30.38.10">
    <property type="entry name" value="Luciferase, Domain 3"/>
    <property type="match status" value="1"/>
</dbReference>
<dbReference type="Gene3D" id="3.30.559.30">
    <property type="entry name" value="Nonribosomal peptide synthetase, condensation domain"/>
    <property type="match status" value="1"/>
</dbReference>
<dbReference type="InterPro" id="IPR010071">
    <property type="entry name" value="AA_adenyl_dom"/>
</dbReference>
<dbReference type="InterPro" id="IPR029058">
    <property type="entry name" value="AB_hydrolase_fold"/>
</dbReference>
<dbReference type="InterPro" id="IPR036736">
    <property type="entry name" value="ACP-like_sf"/>
</dbReference>
<dbReference type="InterPro" id="IPR045851">
    <property type="entry name" value="AMP-bd_C_sf"/>
</dbReference>
<dbReference type="InterPro" id="IPR020845">
    <property type="entry name" value="AMP-binding_CS"/>
</dbReference>
<dbReference type="InterPro" id="IPR000873">
    <property type="entry name" value="AMP-dep_synth/lig_dom"/>
</dbReference>
<dbReference type="InterPro" id="IPR023213">
    <property type="entry name" value="CAT-like_dom_sf"/>
</dbReference>
<dbReference type="InterPro" id="IPR001242">
    <property type="entry name" value="Condensatn"/>
</dbReference>
<dbReference type="InterPro" id="IPR020806">
    <property type="entry name" value="PKS_PP-bd"/>
</dbReference>
<dbReference type="InterPro" id="IPR020802">
    <property type="entry name" value="PKS_thioesterase"/>
</dbReference>
<dbReference type="InterPro" id="IPR009081">
    <property type="entry name" value="PP-bd_ACP"/>
</dbReference>
<dbReference type="InterPro" id="IPR006162">
    <property type="entry name" value="Ppantetheine_attach_site"/>
</dbReference>
<dbReference type="InterPro" id="IPR001031">
    <property type="entry name" value="Thioesterase"/>
</dbReference>
<dbReference type="NCBIfam" id="TIGR01733">
    <property type="entry name" value="AA-adenyl-dom"/>
    <property type="match status" value="1"/>
</dbReference>
<dbReference type="NCBIfam" id="NF007605">
    <property type="entry name" value="PRK10252.1"/>
    <property type="match status" value="1"/>
</dbReference>
<dbReference type="PANTHER" id="PTHR45527:SF1">
    <property type="entry name" value="FATTY ACID SYNTHASE"/>
    <property type="match status" value="1"/>
</dbReference>
<dbReference type="PANTHER" id="PTHR45527">
    <property type="entry name" value="NONRIBOSOMAL PEPTIDE SYNTHETASE"/>
    <property type="match status" value="1"/>
</dbReference>
<dbReference type="Pfam" id="PF00501">
    <property type="entry name" value="AMP-binding"/>
    <property type="match status" value="1"/>
</dbReference>
<dbReference type="Pfam" id="PF00668">
    <property type="entry name" value="Condensation"/>
    <property type="match status" value="1"/>
</dbReference>
<dbReference type="Pfam" id="PF00550">
    <property type="entry name" value="PP-binding"/>
    <property type="match status" value="1"/>
</dbReference>
<dbReference type="Pfam" id="PF00975">
    <property type="entry name" value="Thioesterase"/>
    <property type="match status" value="1"/>
</dbReference>
<dbReference type="SMART" id="SM00823">
    <property type="entry name" value="PKS_PP"/>
    <property type="match status" value="1"/>
</dbReference>
<dbReference type="SMART" id="SM00824">
    <property type="entry name" value="PKS_TE"/>
    <property type="match status" value="1"/>
</dbReference>
<dbReference type="SUPFAM" id="SSF56801">
    <property type="entry name" value="Acetyl-CoA synthetase-like"/>
    <property type="match status" value="1"/>
</dbReference>
<dbReference type="SUPFAM" id="SSF47336">
    <property type="entry name" value="ACP-like"/>
    <property type="match status" value="1"/>
</dbReference>
<dbReference type="SUPFAM" id="SSF53474">
    <property type="entry name" value="alpha/beta-Hydrolases"/>
    <property type="match status" value="1"/>
</dbReference>
<dbReference type="SUPFAM" id="SSF52777">
    <property type="entry name" value="CoA-dependent acyltransferases"/>
    <property type="match status" value="2"/>
</dbReference>
<dbReference type="PROSITE" id="PS00455">
    <property type="entry name" value="AMP_BINDING"/>
    <property type="match status" value="1"/>
</dbReference>
<dbReference type="PROSITE" id="PS50075">
    <property type="entry name" value="CARRIER"/>
    <property type="match status" value="1"/>
</dbReference>
<dbReference type="PROSITE" id="PS00012">
    <property type="entry name" value="PHOSPHOPANTETHEINE"/>
    <property type="match status" value="1"/>
</dbReference>
<feature type="chain" id="PRO_0000193078" description="Enterobactin synthase component F">
    <location>
        <begin position="1"/>
        <end position="1293"/>
    </location>
</feature>
<feature type="domain" description="Carrier" evidence="2">
    <location>
        <begin position="971"/>
        <end position="1046"/>
    </location>
</feature>
<feature type="region of interest" description="Elongation/condensation" evidence="3">
    <location>
        <begin position="1"/>
        <end position="301"/>
    </location>
</feature>
<feature type="region of interest" description="Adenylation" evidence="3">
    <location>
        <begin position="482"/>
        <end position="887"/>
    </location>
</feature>
<feature type="region of interest" description="Thioesterase" evidence="3">
    <location>
        <begin position="1066"/>
        <end position="1293"/>
    </location>
</feature>
<feature type="active site" description="Proton acceptor; for thioesterase activity" evidence="1">
    <location>
        <position position="1271"/>
    </location>
</feature>
<feature type="modified residue" description="O-(pantetheine 4'-phosphoryl)serine" evidence="1">
    <location>
        <position position="1006"/>
    </location>
</feature>
<keyword id="KW-0067">ATP-binding</keyword>
<keyword id="KW-0963">Cytoplasm</keyword>
<keyword id="KW-0259">Enterobactin biosynthesis</keyword>
<keyword id="KW-0436">Ligase</keyword>
<keyword id="KW-0511">Multifunctional enzyme</keyword>
<keyword id="KW-0547">Nucleotide-binding</keyword>
<keyword id="KW-0596">Phosphopantetheine</keyword>
<keyword id="KW-0597">Phosphoprotein</keyword>
<keyword id="KW-1185">Reference proteome</keyword>
<keyword id="KW-0808">Transferase</keyword>
<accession>Q8XBV9</accession>
<sequence>MSQHLPLVAAQPGIWMAEKLSELPSAWSVAHYVELTGEVDAPLLARAVVAGLAQADTLRMRFTEDNGEVWQWVDDALIFELPEIIDLRTNIDPHGTAQALMQADLQQDLRVDSGKPLVFHQLIQVADNRWYWYQRYHHLLVDGFSFPAITRQIANIYCALLRGEQTPASPFTPFADVVEEYQQYRESEAWQRDAAFWAEQRRQLPPPASLSPAPLAGRSASADILRLKLEFTDGEFRQLATQLSGVQRTDLALALAAFWLGRLCNRMDYAAGFIFMRRLGSAALTATGPVLNVLPLGIHIAAQETLPELATRLAAQLKKMRRHQRYDAEQIVRDSGRAAGDEPLFGPVLNIKVFDYQLDIPGVQAQTHTLATGPVNDLELALFPDEHGDLSIEILANKQHYDEPTLIQHAERLKMLIAQFAADPALLCGDVDIMLPGEYAQLAQINATQVEIPETTLSALVAEQAAKTPDAPALADARYQFSYREMREQVVALANLLREHGVKPGDSVAVALPRSVFLTLALHAIVEAGAAWLPLDTGYPDDRLKMMLEDARPSLLITTDDQLPRFADVPDLTNLCYNAPLTPQGSAPLQLSQPHHTAYIIFTSGSTGRPKGVMVGQTAIVNRLLWMQNHYPLTGEDVVAQKTPCSFDVSVWEFFWPFIAGAKLVMAEPEAHRDPLAMQQFFAEYGVTTTHFVPSMLAAFVASLTPQTARQNCATLKQVFCSGEALPADLCREWQQLTGAPLHNLYGPTEAAVDVSWYPAFGEELAQVRGSSVPIGYPVWNTGLRILDAMMHPVPPGVAGDLYLTGIQLAQGYLGRPDLTASRFIADPFVPGERMYRTGDVARWLDNGAVEYLGRSDDQLKIRGQRIELGEIDRVMQALPDVEQAVTHACVINQAAATGGDARQLVGYLVSQSGLPLDTSALQAQLRETLPPHMAPVVLLQLPQLPLSANGKLDRKALPLPELKAQTPGRAPKAGSETIIAAAFASLLGCDVQDADADFFALGGHSLLAMKLAAQLSRQFARQVTPGQVMVASTVAKLATIIDGEEDSSRRMGFETILPLREGNGPTLFCFHPASGFAWQFSVLSRYLDPLWSIIGIQSPRPHGPMQTATNLDEVCEAHLATLLEQQPHGPYYLLGYSLGGTLAQGIAARLRARGEQVAFLGLLDTWPPETQNWQEKEANGLDPEVLAEINREREAFLAAQQGSTSTELFTTIEGNYADAVRLLTTAHSVPFDGKATLFVAERTLQEGMSPERAWSPWIAELDIYRQDCAHVDIISPGAFEKIGPIIRATLNR</sequence>
<name>ENTF_ECO57</name>
<protein>
    <recommendedName>
        <fullName evidence="1">Enterobactin synthase component F</fullName>
        <ecNumber evidence="1">6.3.2.14</ecNumber>
    </recommendedName>
    <alternativeName>
        <fullName evidence="1">Enterochelin synthase F</fullName>
    </alternativeName>
    <alternativeName>
        <fullName evidence="1">Nonribosomal peptide synthetase EntF</fullName>
    </alternativeName>
    <domain>
        <recommendedName>
            <fullName evidence="1">L-serine--[L-seryl-carrier protein] ligase</fullName>
            <ecNumber evidence="1">6.2.1.72</ecNumber>
        </recommendedName>
        <alternativeName>
            <fullName evidence="1">Serine-activating enzyme</fullName>
        </alternativeName>
        <alternativeName>
            <fullName evidence="1">Seryl-AMP ligase</fullName>
        </alternativeName>
    </domain>
</protein>
<reference key="1">
    <citation type="journal article" date="2001" name="Nature">
        <title>Genome sequence of enterohaemorrhagic Escherichia coli O157:H7.</title>
        <authorList>
            <person name="Perna N.T."/>
            <person name="Plunkett G. III"/>
            <person name="Burland V."/>
            <person name="Mau B."/>
            <person name="Glasner J.D."/>
            <person name="Rose D.J."/>
            <person name="Mayhew G.F."/>
            <person name="Evans P.S."/>
            <person name="Gregor J."/>
            <person name="Kirkpatrick H.A."/>
            <person name="Posfai G."/>
            <person name="Hackett J."/>
            <person name="Klink S."/>
            <person name="Boutin A."/>
            <person name="Shao Y."/>
            <person name="Miller L."/>
            <person name="Grotbeck E.J."/>
            <person name="Davis N.W."/>
            <person name="Lim A."/>
            <person name="Dimalanta E.T."/>
            <person name="Potamousis K."/>
            <person name="Apodaca J."/>
            <person name="Anantharaman T.S."/>
            <person name="Lin J."/>
            <person name="Yen G."/>
            <person name="Schwartz D.C."/>
            <person name="Welch R.A."/>
            <person name="Blattner F.R."/>
        </authorList>
    </citation>
    <scope>NUCLEOTIDE SEQUENCE [LARGE SCALE GENOMIC DNA]</scope>
    <source>
        <strain>O157:H7 / EDL933 / ATCC 700927 / EHEC</strain>
    </source>
</reference>
<reference key="2">
    <citation type="journal article" date="2001" name="DNA Res.">
        <title>Complete genome sequence of enterohemorrhagic Escherichia coli O157:H7 and genomic comparison with a laboratory strain K-12.</title>
        <authorList>
            <person name="Hayashi T."/>
            <person name="Makino K."/>
            <person name="Ohnishi M."/>
            <person name="Kurokawa K."/>
            <person name="Ishii K."/>
            <person name="Yokoyama K."/>
            <person name="Han C.-G."/>
            <person name="Ohtsubo E."/>
            <person name="Nakayama K."/>
            <person name="Murata T."/>
            <person name="Tanaka M."/>
            <person name="Tobe T."/>
            <person name="Iida T."/>
            <person name="Takami H."/>
            <person name="Honda T."/>
            <person name="Sasakawa C."/>
            <person name="Ogasawara N."/>
            <person name="Yasunaga T."/>
            <person name="Kuhara S."/>
            <person name="Shiba T."/>
            <person name="Hattori M."/>
            <person name="Shinagawa H."/>
        </authorList>
    </citation>
    <scope>NUCLEOTIDE SEQUENCE [LARGE SCALE GENOMIC DNA]</scope>
    <source>
        <strain>O157:H7 / Sakai / RIMD 0509952 / EHEC</strain>
    </source>
</reference>
<gene>
    <name type="primary">entF</name>
    <name type="ordered locus">Z0727</name>
    <name type="ordered locus">ECs0625</name>
</gene>
<evidence type="ECO:0000250" key="1">
    <source>
        <dbReference type="UniProtKB" id="P11454"/>
    </source>
</evidence>
<evidence type="ECO:0000255" key="2">
    <source>
        <dbReference type="PROSITE-ProRule" id="PRU00258"/>
    </source>
</evidence>
<evidence type="ECO:0000305" key="3"/>